<accession>Q7WJ94</accession>
<organism>
    <name type="scientific">Bordetella bronchiseptica (strain ATCC BAA-588 / NCTC 13252 / RB50)</name>
    <name type="common">Alcaligenes bronchisepticus</name>
    <dbReference type="NCBI Taxonomy" id="257310"/>
    <lineage>
        <taxon>Bacteria</taxon>
        <taxon>Pseudomonadati</taxon>
        <taxon>Pseudomonadota</taxon>
        <taxon>Betaproteobacteria</taxon>
        <taxon>Burkholderiales</taxon>
        <taxon>Alcaligenaceae</taxon>
        <taxon>Bordetella</taxon>
    </lineage>
</organism>
<dbReference type="EMBL" id="BX640444">
    <property type="protein sequence ID" value="CAE33098.1"/>
    <property type="molecule type" value="Genomic_DNA"/>
</dbReference>
<dbReference type="RefSeq" id="WP_003811803.1">
    <property type="nucleotide sequence ID" value="NC_002927.3"/>
</dbReference>
<dbReference type="SMR" id="Q7WJ94"/>
<dbReference type="GeneID" id="93203286"/>
<dbReference type="KEGG" id="bbr:BB2605"/>
<dbReference type="eggNOG" id="COG0052">
    <property type="taxonomic scope" value="Bacteria"/>
</dbReference>
<dbReference type="HOGENOM" id="CLU_040318_1_2_4"/>
<dbReference type="Proteomes" id="UP000001027">
    <property type="component" value="Chromosome"/>
</dbReference>
<dbReference type="GO" id="GO:0022627">
    <property type="term" value="C:cytosolic small ribosomal subunit"/>
    <property type="evidence" value="ECO:0007669"/>
    <property type="project" value="TreeGrafter"/>
</dbReference>
<dbReference type="GO" id="GO:0003735">
    <property type="term" value="F:structural constituent of ribosome"/>
    <property type="evidence" value="ECO:0007669"/>
    <property type="project" value="InterPro"/>
</dbReference>
<dbReference type="GO" id="GO:0006412">
    <property type="term" value="P:translation"/>
    <property type="evidence" value="ECO:0007669"/>
    <property type="project" value="UniProtKB-UniRule"/>
</dbReference>
<dbReference type="CDD" id="cd01425">
    <property type="entry name" value="RPS2"/>
    <property type="match status" value="1"/>
</dbReference>
<dbReference type="FunFam" id="1.10.287.610:FF:000001">
    <property type="entry name" value="30S ribosomal protein S2"/>
    <property type="match status" value="1"/>
</dbReference>
<dbReference type="Gene3D" id="3.40.50.10490">
    <property type="entry name" value="Glucose-6-phosphate isomerase like protein, domain 1"/>
    <property type="match status" value="1"/>
</dbReference>
<dbReference type="Gene3D" id="1.10.287.610">
    <property type="entry name" value="Helix hairpin bin"/>
    <property type="match status" value="1"/>
</dbReference>
<dbReference type="HAMAP" id="MF_00291_B">
    <property type="entry name" value="Ribosomal_uS2_B"/>
    <property type="match status" value="1"/>
</dbReference>
<dbReference type="InterPro" id="IPR001865">
    <property type="entry name" value="Ribosomal_uS2"/>
</dbReference>
<dbReference type="InterPro" id="IPR005706">
    <property type="entry name" value="Ribosomal_uS2_bac/mit/plastid"/>
</dbReference>
<dbReference type="InterPro" id="IPR018130">
    <property type="entry name" value="Ribosomal_uS2_CS"/>
</dbReference>
<dbReference type="InterPro" id="IPR023591">
    <property type="entry name" value="Ribosomal_uS2_flav_dom_sf"/>
</dbReference>
<dbReference type="NCBIfam" id="TIGR01011">
    <property type="entry name" value="rpsB_bact"/>
    <property type="match status" value="1"/>
</dbReference>
<dbReference type="PANTHER" id="PTHR12534">
    <property type="entry name" value="30S RIBOSOMAL PROTEIN S2 PROKARYOTIC AND ORGANELLAR"/>
    <property type="match status" value="1"/>
</dbReference>
<dbReference type="PANTHER" id="PTHR12534:SF0">
    <property type="entry name" value="SMALL RIBOSOMAL SUBUNIT PROTEIN US2M"/>
    <property type="match status" value="1"/>
</dbReference>
<dbReference type="Pfam" id="PF00318">
    <property type="entry name" value="Ribosomal_S2"/>
    <property type="match status" value="1"/>
</dbReference>
<dbReference type="PRINTS" id="PR00395">
    <property type="entry name" value="RIBOSOMALS2"/>
</dbReference>
<dbReference type="SUPFAM" id="SSF52313">
    <property type="entry name" value="Ribosomal protein S2"/>
    <property type="match status" value="1"/>
</dbReference>
<dbReference type="PROSITE" id="PS00962">
    <property type="entry name" value="RIBOSOMAL_S2_1"/>
    <property type="match status" value="1"/>
</dbReference>
<sequence length="249" mass="27511">MSLMREMLEAGVHFGHQTRYWNPKMAPYIFGHRNKIHIINLEQTVAKYQEASKFVKQLVARGGNILFVGTKRAARELVATEAARCGMPYVDARWLGGMLTNFKTVKSSIKRLKDMEAMVADGGFERMTKKEGLLFQRELDKLNKSIGGIKDMNGLPDALFVIDVGYHKIAVAEAKVLGIPVVAVVDTNHSPDGIDHVIPGNDDSARAIALYAKGMADAVLEGREQNINGLVEEIGEGQEEFVEVQDNQA</sequence>
<comment type="similarity">
    <text evidence="1">Belongs to the universal ribosomal protein uS2 family.</text>
</comment>
<reference key="1">
    <citation type="journal article" date="2003" name="Nat. Genet.">
        <title>Comparative analysis of the genome sequences of Bordetella pertussis, Bordetella parapertussis and Bordetella bronchiseptica.</title>
        <authorList>
            <person name="Parkhill J."/>
            <person name="Sebaihia M."/>
            <person name="Preston A."/>
            <person name="Murphy L.D."/>
            <person name="Thomson N.R."/>
            <person name="Harris D.E."/>
            <person name="Holden M.T.G."/>
            <person name="Churcher C.M."/>
            <person name="Bentley S.D."/>
            <person name="Mungall K.L."/>
            <person name="Cerdeno-Tarraga A.-M."/>
            <person name="Temple L."/>
            <person name="James K.D."/>
            <person name="Harris B."/>
            <person name="Quail M.A."/>
            <person name="Achtman M."/>
            <person name="Atkin R."/>
            <person name="Baker S."/>
            <person name="Basham D."/>
            <person name="Bason N."/>
            <person name="Cherevach I."/>
            <person name="Chillingworth T."/>
            <person name="Collins M."/>
            <person name="Cronin A."/>
            <person name="Davis P."/>
            <person name="Doggett J."/>
            <person name="Feltwell T."/>
            <person name="Goble A."/>
            <person name="Hamlin N."/>
            <person name="Hauser H."/>
            <person name="Holroyd S."/>
            <person name="Jagels K."/>
            <person name="Leather S."/>
            <person name="Moule S."/>
            <person name="Norberczak H."/>
            <person name="O'Neil S."/>
            <person name="Ormond D."/>
            <person name="Price C."/>
            <person name="Rabbinowitsch E."/>
            <person name="Rutter S."/>
            <person name="Sanders M."/>
            <person name="Saunders D."/>
            <person name="Seeger K."/>
            <person name="Sharp S."/>
            <person name="Simmonds M."/>
            <person name="Skelton J."/>
            <person name="Squares R."/>
            <person name="Squares S."/>
            <person name="Stevens K."/>
            <person name="Unwin L."/>
            <person name="Whitehead S."/>
            <person name="Barrell B.G."/>
            <person name="Maskell D.J."/>
        </authorList>
    </citation>
    <scope>NUCLEOTIDE SEQUENCE [LARGE SCALE GENOMIC DNA]</scope>
    <source>
        <strain>ATCC BAA-588 / NCTC 13252 / RB50</strain>
    </source>
</reference>
<protein>
    <recommendedName>
        <fullName evidence="1">Small ribosomal subunit protein uS2</fullName>
    </recommendedName>
    <alternativeName>
        <fullName evidence="2">30S ribosomal protein S2</fullName>
    </alternativeName>
</protein>
<feature type="chain" id="PRO_0000134135" description="Small ribosomal subunit protein uS2">
    <location>
        <begin position="1"/>
        <end position="249"/>
    </location>
</feature>
<name>RS2_BORBR</name>
<proteinExistence type="inferred from homology"/>
<evidence type="ECO:0000255" key="1">
    <source>
        <dbReference type="HAMAP-Rule" id="MF_00291"/>
    </source>
</evidence>
<evidence type="ECO:0000305" key="2"/>
<gene>
    <name evidence="1" type="primary">rpsB</name>
    <name type="ordered locus">BB2605</name>
</gene>
<keyword id="KW-0687">Ribonucleoprotein</keyword>
<keyword id="KW-0689">Ribosomal protein</keyword>